<dbReference type="EC" id="6.1.1.20" evidence="1"/>
<dbReference type="EMBL" id="CP000514">
    <property type="protein sequence ID" value="ABM19138.1"/>
    <property type="molecule type" value="Genomic_DNA"/>
</dbReference>
<dbReference type="RefSeq" id="WP_011785531.1">
    <property type="nucleotide sequence ID" value="NC_008740.1"/>
</dbReference>
<dbReference type="SMR" id="A1U2B9"/>
<dbReference type="STRING" id="351348.Maqu_2057"/>
<dbReference type="GeneID" id="31820712"/>
<dbReference type="KEGG" id="maq:Maqu_2057"/>
<dbReference type="eggNOG" id="COG0016">
    <property type="taxonomic scope" value="Bacteria"/>
</dbReference>
<dbReference type="HOGENOM" id="CLU_025086_0_1_6"/>
<dbReference type="OrthoDB" id="9800719at2"/>
<dbReference type="Proteomes" id="UP000000998">
    <property type="component" value="Chromosome"/>
</dbReference>
<dbReference type="GO" id="GO:0005737">
    <property type="term" value="C:cytoplasm"/>
    <property type="evidence" value="ECO:0007669"/>
    <property type="project" value="UniProtKB-SubCell"/>
</dbReference>
<dbReference type="GO" id="GO:0005524">
    <property type="term" value="F:ATP binding"/>
    <property type="evidence" value="ECO:0007669"/>
    <property type="project" value="UniProtKB-UniRule"/>
</dbReference>
<dbReference type="GO" id="GO:0000287">
    <property type="term" value="F:magnesium ion binding"/>
    <property type="evidence" value="ECO:0007669"/>
    <property type="project" value="UniProtKB-UniRule"/>
</dbReference>
<dbReference type="GO" id="GO:0004826">
    <property type="term" value="F:phenylalanine-tRNA ligase activity"/>
    <property type="evidence" value="ECO:0007669"/>
    <property type="project" value="UniProtKB-UniRule"/>
</dbReference>
<dbReference type="GO" id="GO:0000049">
    <property type="term" value="F:tRNA binding"/>
    <property type="evidence" value="ECO:0007669"/>
    <property type="project" value="InterPro"/>
</dbReference>
<dbReference type="GO" id="GO:0006432">
    <property type="term" value="P:phenylalanyl-tRNA aminoacylation"/>
    <property type="evidence" value="ECO:0007669"/>
    <property type="project" value="UniProtKB-UniRule"/>
</dbReference>
<dbReference type="CDD" id="cd00496">
    <property type="entry name" value="PheRS_alpha_core"/>
    <property type="match status" value="1"/>
</dbReference>
<dbReference type="FunFam" id="3.30.930.10:FF:000003">
    <property type="entry name" value="Phenylalanine--tRNA ligase alpha subunit"/>
    <property type="match status" value="1"/>
</dbReference>
<dbReference type="Gene3D" id="3.30.930.10">
    <property type="entry name" value="Bira Bifunctional Protein, Domain 2"/>
    <property type="match status" value="1"/>
</dbReference>
<dbReference type="HAMAP" id="MF_00281">
    <property type="entry name" value="Phe_tRNA_synth_alpha1"/>
    <property type="match status" value="1"/>
</dbReference>
<dbReference type="InterPro" id="IPR006195">
    <property type="entry name" value="aa-tRNA-synth_II"/>
</dbReference>
<dbReference type="InterPro" id="IPR045864">
    <property type="entry name" value="aa-tRNA-synth_II/BPL/LPL"/>
</dbReference>
<dbReference type="InterPro" id="IPR004529">
    <property type="entry name" value="Phe-tRNA-synth_IIc_asu"/>
</dbReference>
<dbReference type="InterPro" id="IPR004188">
    <property type="entry name" value="Phe-tRNA_ligase_II_N"/>
</dbReference>
<dbReference type="InterPro" id="IPR022911">
    <property type="entry name" value="Phe_tRNA_ligase_alpha1_bac"/>
</dbReference>
<dbReference type="InterPro" id="IPR002319">
    <property type="entry name" value="Phenylalanyl-tRNA_Synthase"/>
</dbReference>
<dbReference type="InterPro" id="IPR010978">
    <property type="entry name" value="tRNA-bd_arm"/>
</dbReference>
<dbReference type="NCBIfam" id="TIGR00468">
    <property type="entry name" value="pheS"/>
    <property type="match status" value="1"/>
</dbReference>
<dbReference type="PANTHER" id="PTHR11538:SF41">
    <property type="entry name" value="PHENYLALANINE--TRNA LIGASE, MITOCHONDRIAL"/>
    <property type="match status" value="1"/>
</dbReference>
<dbReference type="PANTHER" id="PTHR11538">
    <property type="entry name" value="PHENYLALANYL-TRNA SYNTHETASE"/>
    <property type="match status" value="1"/>
</dbReference>
<dbReference type="Pfam" id="PF02912">
    <property type="entry name" value="Phe_tRNA-synt_N"/>
    <property type="match status" value="1"/>
</dbReference>
<dbReference type="Pfam" id="PF01409">
    <property type="entry name" value="tRNA-synt_2d"/>
    <property type="match status" value="1"/>
</dbReference>
<dbReference type="SUPFAM" id="SSF55681">
    <property type="entry name" value="Class II aaRS and biotin synthetases"/>
    <property type="match status" value="1"/>
</dbReference>
<dbReference type="SUPFAM" id="SSF46589">
    <property type="entry name" value="tRNA-binding arm"/>
    <property type="match status" value="1"/>
</dbReference>
<dbReference type="PROSITE" id="PS50862">
    <property type="entry name" value="AA_TRNA_LIGASE_II"/>
    <property type="match status" value="1"/>
</dbReference>
<name>SYFA_MARN8</name>
<accession>A1U2B9</accession>
<keyword id="KW-0030">Aminoacyl-tRNA synthetase</keyword>
<keyword id="KW-0067">ATP-binding</keyword>
<keyword id="KW-0963">Cytoplasm</keyword>
<keyword id="KW-0436">Ligase</keyword>
<keyword id="KW-0460">Magnesium</keyword>
<keyword id="KW-0479">Metal-binding</keyword>
<keyword id="KW-0547">Nucleotide-binding</keyword>
<keyword id="KW-0648">Protein biosynthesis</keyword>
<proteinExistence type="inferred from homology"/>
<sequence>MENLEQLVQDGLNAVEKADNLQALDQIRVEYLGKKGVITQQAKTLGKLSAEERPAAGQKINEAKGQVEQAINARRADLEKAAIEARLAAESIDVTLPGRGQDLGGLHPVTRTLQRIEEIFARAGYSVEQGPEIEDDYHNFEALNIPGHHPARAMHDTFYFNPGTLLRTHTSPVQIRTMEAGKPPFRMICPGRVYRCDSDMTHTPMFHQVEGLLVEKNVSFADLKSTVEEFLRVFFERDLKVRFRPSYFPFTEPSAEVDIEWGREPDGSIKWLEVMGCGMVHPKVFEYCGIDSEEYRGFAFGLGVERLAMLRYGVKDLRMFFENDLRFLRQFR</sequence>
<evidence type="ECO:0000255" key="1">
    <source>
        <dbReference type="HAMAP-Rule" id="MF_00281"/>
    </source>
</evidence>
<organism>
    <name type="scientific">Marinobacter nauticus (strain ATCC 700491 / DSM 11845 / VT8)</name>
    <name type="common">Marinobacter aquaeolei</name>
    <dbReference type="NCBI Taxonomy" id="351348"/>
    <lineage>
        <taxon>Bacteria</taxon>
        <taxon>Pseudomonadati</taxon>
        <taxon>Pseudomonadota</taxon>
        <taxon>Gammaproteobacteria</taxon>
        <taxon>Pseudomonadales</taxon>
        <taxon>Marinobacteraceae</taxon>
        <taxon>Marinobacter</taxon>
    </lineage>
</organism>
<reference key="1">
    <citation type="journal article" date="2011" name="Appl. Environ. Microbiol.">
        <title>Genomic potential of Marinobacter aquaeolei, a biogeochemical 'opportunitroph'.</title>
        <authorList>
            <person name="Singer E."/>
            <person name="Webb E.A."/>
            <person name="Nelson W.C."/>
            <person name="Heidelberg J.F."/>
            <person name="Ivanova N."/>
            <person name="Pati A."/>
            <person name="Edwards K.J."/>
        </authorList>
    </citation>
    <scope>NUCLEOTIDE SEQUENCE [LARGE SCALE GENOMIC DNA]</scope>
    <source>
        <strain>ATCC 700491 / DSM 11845 / VT8</strain>
    </source>
</reference>
<gene>
    <name evidence="1" type="primary">pheS</name>
    <name type="ordered locus">Maqu_2057</name>
</gene>
<protein>
    <recommendedName>
        <fullName evidence="1">Phenylalanine--tRNA ligase alpha subunit</fullName>
        <ecNumber evidence="1">6.1.1.20</ecNumber>
    </recommendedName>
    <alternativeName>
        <fullName evidence="1">Phenylalanyl-tRNA synthetase alpha subunit</fullName>
        <shortName evidence="1">PheRS</shortName>
    </alternativeName>
</protein>
<feature type="chain" id="PRO_1000006858" description="Phenylalanine--tRNA ligase alpha subunit">
    <location>
        <begin position="1"/>
        <end position="332"/>
    </location>
</feature>
<feature type="binding site" evidence="1">
    <location>
        <position position="252"/>
    </location>
    <ligand>
        <name>Mg(2+)</name>
        <dbReference type="ChEBI" id="CHEBI:18420"/>
        <note>shared with beta subunit</note>
    </ligand>
</feature>
<comment type="catalytic activity">
    <reaction evidence="1">
        <text>tRNA(Phe) + L-phenylalanine + ATP = L-phenylalanyl-tRNA(Phe) + AMP + diphosphate + H(+)</text>
        <dbReference type="Rhea" id="RHEA:19413"/>
        <dbReference type="Rhea" id="RHEA-COMP:9668"/>
        <dbReference type="Rhea" id="RHEA-COMP:9699"/>
        <dbReference type="ChEBI" id="CHEBI:15378"/>
        <dbReference type="ChEBI" id="CHEBI:30616"/>
        <dbReference type="ChEBI" id="CHEBI:33019"/>
        <dbReference type="ChEBI" id="CHEBI:58095"/>
        <dbReference type="ChEBI" id="CHEBI:78442"/>
        <dbReference type="ChEBI" id="CHEBI:78531"/>
        <dbReference type="ChEBI" id="CHEBI:456215"/>
        <dbReference type="EC" id="6.1.1.20"/>
    </reaction>
</comment>
<comment type="cofactor">
    <cofactor evidence="1">
        <name>Mg(2+)</name>
        <dbReference type="ChEBI" id="CHEBI:18420"/>
    </cofactor>
    <text evidence="1">Binds 2 magnesium ions per tetramer.</text>
</comment>
<comment type="subunit">
    <text evidence="1">Tetramer of two alpha and two beta subunits.</text>
</comment>
<comment type="subcellular location">
    <subcellularLocation>
        <location evidence="1">Cytoplasm</location>
    </subcellularLocation>
</comment>
<comment type="similarity">
    <text evidence="1">Belongs to the class-II aminoacyl-tRNA synthetase family. Phe-tRNA synthetase alpha subunit type 1 subfamily.</text>
</comment>